<name>VGFR1_MOUSE</name>
<accession>P35969</accession>
<accession>O55094</accession>
<accession>Q61517</accession>
<reference key="1">
    <citation type="journal article" date="1993" name="Oncogene">
        <title>Molecular cloning of murine FLT and FLT4.</title>
        <authorList>
            <person name="Finnerty H."/>
            <person name="Kelleher K."/>
            <person name="Morris G.E."/>
            <person name="Bean K."/>
            <person name="Merberg D.M."/>
            <person name="Kriz R."/>
            <person name="Morris J.C."/>
            <person name="Sookdeo H."/>
            <person name="Turner K.J."/>
            <person name="Wood C.R."/>
        </authorList>
    </citation>
    <scope>NUCLEOTIDE SEQUENCE [MRNA]</scope>
    <source>
        <strain>BALB/cJ</strain>
        <tissue>Neonatal brain</tissue>
        <tissue>Placenta</tissue>
    </source>
</reference>
<reference key="2">
    <citation type="journal article" date="1994" name="Oncogene">
        <title>Isolation of a gene encoding a novel receptor tyrosine kinase from differentiated embryonic stem cells.</title>
        <authorList>
            <person name="Choi K."/>
            <person name="Wall C."/>
            <person name="Hanratty R."/>
            <person name="Keller G."/>
        </authorList>
    </citation>
    <scope>NUCLEOTIDE SEQUENCE [MRNA]</scope>
    <source>
        <tissue>Brain</tissue>
    </source>
</reference>
<reference key="3">
    <citation type="journal article" date="1998" name="Gene">
        <title>Genomic organization of the flt-1 gene encoding for vascular endothelial growth factor (VEGF) receptor-1 suggests an intimate evolutionary relationship between the 7-Ig and the 5-Ig tyrosine kinase receptors.</title>
        <authorList>
            <person name="Kondo K."/>
            <person name="Hiratsuka S."/>
            <person name="Subbalakshmi E."/>
            <person name="Matsushime H."/>
            <person name="Shibuya M."/>
        </authorList>
    </citation>
    <scope>NUCLEOTIDE SEQUENCE [MRNA]</scope>
    <source>
        <strain>C57BL/6J</strain>
        <tissue>Lung</tissue>
    </source>
</reference>
<reference key="4">
    <citation type="submission" date="2007-04" db="UniProtKB">
        <authorList>
            <person name="Lubec G."/>
            <person name="Kang S.U."/>
        </authorList>
    </citation>
    <scope>PROTEIN SEQUENCE OF 110-119 AND 185-191</scope>
    <scope>IDENTIFICATION BY MASS SPECTROMETRY</scope>
    <source>
        <strain>C57BL/6J</strain>
        <tissue>Brain</tissue>
    </source>
</reference>
<reference key="5">
    <citation type="journal article" date="1995" name="Nature">
        <title>Role of the Flt-1 receptor tyrosine kinase in regulating the assembly of vascular endothelium.</title>
        <authorList>
            <person name="Fong G.H."/>
            <person name="Rossant J."/>
            <person name="Gertsenstein M."/>
            <person name="Breitman M.L."/>
        </authorList>
    </citation>
    <scope>DISRUPTION PHENOTYPE</scope>
    <scope>FUNCTION IN BLOOD VESSEL DEVELOPMENT DURING EMBRYOGENESIS</scope>
</reference>
<reference key="6">
    <citation type="journal article" date="1998" name="Proc. Natl. Acad. Sci. U.S.A.">
        <title>Flt-1 lacking the tyrosine kinase domain is sufficient for normal development and angiogenesis in mice.</title>
        <authorList>
            <person name="Hiratsuka S."/>
            <person name="Minowa O."/>
            <person name="Kuno J."/>
            <person name="Noda T."/>
            <person name="Shibuya M."/>
        </authorList>
    </citation>
    <scope>DISRUPTION PHENOTYPE</scope>
    <scope>FUNCTION IN MACROPHAGE MIGRATION</scope>
</reference>
<reference key="7">
    <citation type="journal article" date="2001" name="Cancer Res.">
        <title>Involvement of Flt-1 tyrosine kinase (vascular endothelial growth factor receptor-1) in pathological angiogenesis.</title>
        <authorList>
            <person name="Hiratsuka S."/>
            <person name="Maru Y."/>
            <person name="Okada A."/>
            <person name="Seiki M."/>
            <person name="Noda T."/>
            <person name="Shibuya M."/>
        </authorList>
    </citation>
    <scope>FUNCTION IN ANGIOGENESIS</scope>
</reference>
<reference key="8">
    <citation type="journal article" date="2004" name="Blood">
        <title>The VEGF receptor flt-1 (VEGFR-1) is a positive modulator of vascular sprout formation and branching morphogenesis.</title>
        <authorList>
            <person name="Kearney J.B."/>
            <person name="Kappas N.C."/>
            <person name="Ellerstrom C."/>
            <person name="DiPaola F.W."/>
            <person name="Bautch V.L."/>
        </authorList>
    </citation>
    <scope>DISRUPTION PHENOTYPE</scope>
    <scope>FUNCTION</scope>
</reference>
<reference key="9">
    <citation type="journal article" date="2008" name="Circ. Res.">
        <title>Vascular endothelial growth factor receptor-1 regulates postnatal angiogenesis through inhibition of the excessive activation of Akt.</title>
        <authorList>
            <person name="Nishi J."/>
            <person name="Minamino T."/>
            <person name="Miyauchi H."/>
            <person name="Nojima A."/>
            <person name="Tateno K."/>
            <person name="Okada S."/>
            <person name="Orimo M."/>
            <person name="Moriya J."/>
            <person name="Fong G.H."/>
            <person name="Sunagawa K."/>
            <person name="Shibuya M."/>
            <person name="Komuro I."/>
        </authorList>
    </citation>
    <scope>FUNCTION IN ANGIOGENESIS</scope>
</reference>
<reference key="10">
    <citation type="journal article" date="2010" name="Cancer Res.">
        <title>Vascular endothelial growth factor receptor-1 signaling promotes mobilization of macrophage lineage cells from bone marrow and stimulates solid tumor growth.</title>
        <authorList>
            <person name="Muramatsu M."/>
            <person name="Yamamoto S."/>
            <person name="Osawa T."/>
            <person name="Shibuya M."/>
        </authorList>
    </citation>
    <scope>FUNCTION</scope>
</reference>
<reference key="11">
    <citation type="journal article" date="2019" name="Nat. Cell Biol.">
        <title>An opsin 5-dopamine pathway mediates light-dependent vascular development in the eye.</title>
        <authorList>
            <person name="Nguyen M.T."/>
            <person name="Vemaraju S."/>
            <person name="Nayak G."/>
            <person name="Odaka Y."/>
            <person name="Buhr E.D."/>
            <person name="Alonzo N."/>
            <person name="Tran U."/>
            <person name="Batie M."/>
            <person name="Upton B.A."/>
            <person name="Darvas M."/>
            <person name="Kozmik Z."/>
            <person name="Rao S."/>
            <person name="Hegde R.S."/>
            <person name="Iuvone P.M."/>
            <person name="Van Gelder R.N."/>
            <person name="Lang R.A."/>
        </authorList>
    </citation>
    <scope>FUNCTION</scope>
    <scope>DISRUPTION PHENOTYPE</scope>
</reference>
<organism>
    <name type="scientific">Mus musculus</name>
    <name type="common">Mouse</name>
    <dbReference type="NCBI Taxonomy" id="10090"/>
    <lineage>
        <taxon>Eukaryota</taxon>
        <taxon>Metazoa</taxon>
        <taxon>Chordata</taxon>
        <taxon>Craniata</taxon>
        <taxon>Vertebrata</taxon>
        <taxon>Euteleostomi</taxon>
        <taxon>Mammalia</taxon>
        <taxon>Eutheria</taxon>
        <taxon>Euarchontoglires</taxon>
        <taxon>Glires</taxon>
        <taxon>Rodentia</taxon>
        <taxon>Myomorpha</taxon>
        <taxon>Muroidea</taxon>
        <taxon>Muridae</taxon>
        <taxon>Murinae</taxon>
        <taxon>Mus</taxon>
        <taxon>Mus</taxon>
    </lineage>
</organism>
<proteinExistence type="evidence at protein level"/>
<protein>
    <recommendedName>
        <fullName>Vascular endothelial growth factor receptor 1</fullName>
        <shortName>VEGFR-1</shortName>
        <ecNumber>2.7.10.1</ecNumber>
    </recommendedName>
    <alternativeName>
        <fullName>Embryonic receptor kinase 2</fullName>
    </alternativeName>
    <alternativeName>
        <fullName>Fms-like tyrosine kinase 1</fullName>
        <shortName>FLT-1</shortName>
    </alternativeName>
    <alternativeName>
        <fullName>Tyrosine-protein kinase receptor FLT</fullName>
    </alternativeName>
</protein>
<keyword id="KW-0037">Angiogenesis</keyword>
<keyword id="KW-0067">ATP-binding</keyword>
<keyword id="KW-1003">Cell membrane</keyword>
<keyword id="KW-0145">Chemotaxis</keyword>
<keyword id="KW-0217">Developmental protein</keyword>
<keyword id="KW-0221">Differentiation</keyword>
<keyword id="KW-0903">Direct protein sequencing</keyword>
<keyword id="KW-1015">Disulfide bond</keyword>
<keyword id="KW-0967">Endosome</keyword>
<keyword id="KW-0325">Glycoprotein</keyword>
<keyword id="KW-0393">Immunoglobulin domain</keyword>
<keyword id="KW-0418">Kinase</keyword>
<keyword id="KW-0472">Membrane</keyword>
<keyword id="KW-0547">Nucleotide-binding</keyword>
<keyword id="KW-0597">Phosphoprotein</keyword>
<keyword id="KW-0675">Receptor</keyword>
<keyword id="KW-1185">Reference proteome</keyword>
<keyword id="KW-0677">Repeat</keyword>
<keyword id="KW-0732">Signal</keyword>
<keyword id="KW-0808">Transferase</keyword>
<keyword id="KW-0812">Transmembrane</keyword>
<keyword id="KW-1133">Transmembrane helix</keyword>
<keyword id="KW-0829">Tyrosine-protein kinase</keyword>
<keyword id="KW-0832">Ubl conjugation</keyword>
<evidence type="ECO:0000250" key="1"/>
<evidence type="ECO:0000250" key="2">
    <source>
        <dbReference type="UniProtKB" id="P17948"/>
    </source>
</evidence>
<evidence type="ECO:0000255" key="3"/>
<evidence type="ECO:0000255" key="4">
    <source>
        <dbReference type="PROSITE-ProRule" id="PRU00114"/>
    </source>
</evidence>
<evidence type="ECO:0000255" key="5">
    <source>
        <dbReference type="PROSITE-ProRule" id="PRU00159"/>
    </source>
</evidence>
<evidence type="ECO:0000255" key="6">
    <source>
        <dbReference type="PROSITE-ProRule" id="PRU10028"/>
    </source>
</evidence>
<evidence type="ECO:0000256" key="7">
    <source>
        <dbReference type="SAM" id="MobiDB-lite"/>
    </source>
</evidence>
<evidence type="ECO:0000269" key="8">
    <source>
    </source>
</evidence>
<evidence type="ECO:0000269" key="9">
    <source>
    </source>
</evidence>
<evidence type="ECO:0000269" key="10">
    <source>
    </source>
</evidence>
<evidence type="ECO:0000269" key="11">
    <source>
    </source>
</evidence>
<evidence type="ECO:0000269" key="12">
    <source>
    </source>
</evidence>
<evidence type="ECO:0000269" key="13">
    <source>
    </source>
</evidence>
<evidence type="ECO:0000269" key="14">
    <source>
    </source>
</evidence>
<evidence type="ECO:0000305" key="15"/>
<feature type="signal peptide" evidence="3">
    <location>
        <begin position="1"/>
        <end position="22"/>
    </location>
</feature>
<feature type="chain" id="PRO_0000016769" description="Vascular endothelial growth factor receptor 1">
    <location>
        <begin position="23"/>
        <end position="1333"/>
    </location>
</feature>
<feature type="topological domain" description="Extracellular" evidence="3">
    <location>
        <begin position="23"/>
        <end position="759"/>
    </location>
</feature>
<feature type="transmembrane region" description="Helical" evidence="3">
    <location>
        <begin position="760"/>
        <end position="781"/>
    </location>
</feature>
<feature type="topological domain" description="Cytoplasmic" evidence="3">
    <location>
        <begin position="782"/>
        <end position="1333"/>
    </location>
</feature>
<feature type="domain" description="Ig-like C2-type 1">
    <location>
        <begin position="32"/>
        <end position="124"/>
    </location>
</feature>
<feature type="domain" description="Ig-like C2-type 2">
    <location>
        <begin position="152"/>
        <end position="215"/>
    </location>
</feature>
<feature type="domain" description="Ig-like C2-type 3">
    <location>
        <begin position="231"/>
        <end position="328"/>
    </location>
</feature>
<feature type="domain" description="Ig-like C2-type 4">
    <location>
        <begin position="334"/>
        <end position="429"/>
    </location>
</feature>
<feature type="domain" description="Ig-like C2-type 5">
    <location>
        <begin position="430"/>
        <end position="550"/>
    </location>
</feature>
<feature type="domain" description="Ig-like C2-type 6">
    <location>
        <begin position="557"/>
        <end position="656"/>
    </location>
</feature>
<feature type="domain" description="Ig-like C2-type 7">
    <location>
        <begin position="662"/>
        <end position="748"/>
    </location>
</feature>
<feature type="domain" description="Protein kinase" evidence="5">
    <location>
        <begin position="828"/>
        <end position="1158"/>
    </location>
</feature>
<feature type="region of interest" description="Disordered" evidence="7">
    <location>
        <begin position="947"/>
        <end position="983"/>
    </location>
</feature>
<feature type="compositionally biased region" description="Low complexity" evidence="7">
    <location>
        <begin position="960"/>
        <end position="970"/>
    </location>
</feature>
<feature type="active site" description="Proton acceptor" evidence="5 6">
    <location>
        <position position="1022"/>
    </location>
</feature>
<feature type="binding site" evidence="5">
    <location>
        <begin position="834"/>
        <end position="842"/>
    </location>
    <ligand>
        <name>ATP</name>
        <dbReference type="ChEBI" id="CHEBI:30616"/>
    </ligand>
</feature>
<feature type="binding site" evidence="5">
    <location>
        <position position="862"/>
    </location>
    <ligand>
        <name>ATP</name>
        <dbReference type="ChEBI" id="CHEBI:30616"/>
    </ligand>
</feature>
<feature type="site" description="Cleavage; by PSEN1" evidence="1">
    <location>
        <begin position="768"/>
        <end position="769"/>
    </location>
</feature>
<feature type="modified residue" description="Phosphotyrosine; by autocatalysis" evidence="2">
    <location>
        <position position="915"/>
    </location>
</feature>
<feature type="modified residue" description="Phosphotyrosine; by autocatalysis" evidence="1">
    <location>
        <position position="1053"/>
    </location>
</feature>
<feature type="modified residue" description="Phosphotyrosine; by autocatalysis" evidence="2">
    <location>
        <position position="1169"/>
    </location>
</feature>
<feature type="modified residue" description="Phosphotyrosine; by autocatalysis" evidence="2">
    <location>
        <position position="1213"/>
    </location>
</feature>
<feature type="modified residue" description="Phosphotyrosine; by autocatalysis" evidence="2">
    <location>
        <position position="1242"/>
    </location>
</feature>
<feature type="modified residue" description="Phosphotyrosine; by autocatalysis" evidence="2">
    <location>
        <position position="1322"/>
    </location>
</feature>
<feature type="modified residue" description="Phosphotyrosine; by autocatalysis" evidence="2">
    <location>
        <position position="1328"/>
    </location>
</feature>
<feature type="glycosylation site" description="N-linked (GlcNAc...) asparagine" evidence="3">
    <location>
        <position position="101"/>
    </location>
</feature>
<feature type="glycosylation site" description="N-linked (GlcNAc...) asparagine" evidence="3">
    <location>
        <position position="165"/>
    </location>
</feature>
<feature type="glycosylation site" description="N-linked (GlcNAc...) asparagine" evidence="3">
    <location>
        <position position="197"/>
    </location>
</feature>
<feature type="glycosylation site" description="N-linked (GlcNAc...) asparagine" evidence="3">
    <location>
        <position position="252"/>
    </location>
</feature>
<feature type="glycosylation site" description="N-linked (GlcNAc...) asparagine" evidence="3">
    <location>
        <position position="324"/>
    </location>
</feature>
<feature type="glycosylation site" description="N-linked (GlcNAc...) asparagine" evidence="3">
    <location>
        <position position="418"/>
    </location>
</feature>
<feature type="glycosylation site" description="N-linked (GlcNAc...) asparagine" evidence="3">
    <location>
        <position position="475"/>
    </location>
</feature>
<feature type="glycosylation site" description="N-linked (GlcNAc...) asparagine" evidence="3">
    <location>
        <position position="517"/>
    </location>
</feature>
<feature type="glycosylation site" description="N-linked (GlcNAc...) asparagine" evidence="3">
    <location>
        <position position="598"/>
    </location>
</feature>
<feature type="glycosylation site" description="N-linked (GlcNAc...) asparagine" evidence="3">
    <location>
        <position position="626"/>
    </location>
</feature>
<feature type="glycosylation site" description="N-linked (GlcNAc...) asparagine" evidence="3">
    <location>
        <position position="667"/>
    </location>
</feature>
<feature type="glycosylation site" description="N-linked (GlcNAc...) asparagine" evidence="3">
    <location>
        <position position="714"/>
    </location>
</feature>
<feature type="disulfide bond" evidence="4">
    <location>
        <begin position="53"/>
        <end position="108"/>
    </location>
</feature>
<feature type="disulfide bond" evidence="4">
    <location>
        <begin position="159"/>
        <end position="208"/>
    </location>
</feature>
<feature type="disulfide bond" evidence="4">
    <location>
        <begin position="253"/>
        <end position="312"/>
    </location>
</feature>
<feature type="disulfide bond" evidence="4">
    <location>
        <begin position="455"/>
        <end position="536"/>
    </location>
</feature>
<feature type="disulfide bond" evidence="4">
    <location>
        <begin position="578"/>
        <end position="637"/>
    </location>
</feature>
<feature type="disulfide bond" evidence="4">
    <location>
        <begin position="683"/>
        <end position="732"/>
    </location>
</feature>
<feature type="sequence conflict" description="In Ref. 2; CAA55311." evidence="15" ref="2">
    <location>
        <position position="158"/>
    </location>
</feature>
<feature type="sequence conflict" description="In Ref. 2; CAA55311." evidence="15" ref="2">
    <location>
        <position position="211"/>
    </location>
</feature>
<feature type="sequence conflict" description="In Ref. 2; CAA55311." evidence="15" ref="2">
    <original>H</original>
    <variation>L</variation>
    <location>
        <position position="245"/>
    </location>
</feature>
<feature type="sequence conflict" description="In Ref. 2; CAA55311." evidence="15" ref="2">
    <original>H</original>
    <variation>N</variation>
    <location>
        <position position="603"/>
    </location>
</feature>
<feature type="sequence conflict" description="In Ref. 2; CAA55311." evidence="15" ref="2">
    <original>KMATTQD</original>
    <variation>NGHHSS</variation>
    <location>
        <begin position="609"/>
        <end position="615"/>
    </location>
</feature>
<feature type="sequence conflict" description="In Ref. 2; CAA55311." evidence="15" ref="2">
    <original>F</original>
    <variation>L</variation>
    <location>
        <position position="696"/>
    </location>
</feature>
<feature type="sequence conflict" description="In Ref. 2; CAA55311." evidence="15" ref="2">
    <original>A</original>
    <variation>S</variation>
    <location>
        <position position="734"/>
    </location>
</feature>
<feature type="sequence conflict" description="In Ref. 2; CAA55311." evidence="15" ref="2">
    <original>C</original>
    <variation>Y</variation>
    <location>
        <position position="765"/>
    </location>
</feature>
<feature type="sequence conflict" description="In Ref. 2; CAA55311." evidence="15" ref="2">
    <original>K</original>
    <variation>N</variation>
    <location>
        <position position="820"/>
    </location>
</feature>
<feature type="sequence conflict" description="In Ref. 2; CAA55311." evidence="15" ref="2">
    <original>G</original>
    <variation>R</variation>
    <location>
        <position position="1009"/>
    </location>
</feature>
<feature type="sequence conflict" description="In Ref. 3; BAA24498." evidence="15" ref="3">
    <original>S</original>
    <variation>G</variation>
    <location>
        <position position="1181"/>
    </location>
</feature>
<feature type="sequence conflict" description="In Ref. 2; CAA55311." evidence="15" ref="2">
    <original>S</original>
    <variation>N</variation>
    <location>
        <position position="1181"/>
    </location>
</feature>
<feature type="sequence conflict" description="In Ref. 2; CAA55311." evidence="15" ref="2">
    <original>LF</original>
    <variation>RG</variation>
    <location>
        <begin position="1193"/>
        <end position="1194"/>
    </location>
</feature>
<feature type="sequence conflict" description="In Ref. 2; CAA55311." evidence="15" ref="2">
    <original>KS</original>
    <variation>PR</variation>
    <location>
        <begin position="1278"/>
        <end position="1279"/>
    </location>
</feature>
<comment type="function">
    <text evidence="1 2 8 9 10 11 12 13 14">Tyrosine-protein kinase that acts as a cell-surface receptor for VEGFA, VEGFB and PGF, and plays an essential role in the development of embryonic vasculature, the regulation of angiogenesis, cell survival, cell migration, macrophage function, chemotaxis, and cancer cell invasion. Acts as a positive regulator of postnatal retinal hyaloid vessel regression (PubMed:30936473). May play an essential role as a negative regulator of embryonic angiogenesis by inhibiting excessive proliferation of endothelial cells. Can promote endothelial cell proliferation, survival and angiogenesis in adulthood. Its function in promoting cell proliferation seems to be cell-type specific. Promotes PGF-mediated proliferation of endothelial cells, and proliferation of some types of cancer cells, but does not promote proliferation of normal fibroblasts. Has very high affinity for VEGFA and relatively low protein kinase activity; may function as a negative regulator of VEGFA signaling by limiting the amount of free VEGFA and preventing its binding to KDR. Modulates KDR signaling by forming heterodimers with KDR. Ligand binding leads to the activation of several signaling cascades. Activation of PLCG leads to the production of the cellular signaling molecules diacylglycerol and inositol 1,4,5-trisphosphate and the activation of protein kinase C. Mediates phosphorylation of PIK3R1, the regulatory subunit of phosphatidylinositol 3-kinase, leading to the activation of phosphatidylinositol kinase and the downstream signaling pathway. Mediates activation of MAPK1/ERK2, MAPK3/ERK1 and the MAP kinase signaling pathway, as well as of the AKT1 signaling pathway. Phosphorylates SRC, YES1 and PLCG, and may also phosphorylate CBL. Promotes phosphorylation of AKT1 and PTK2/FAK1 (By similarity).</text>
</comment>
<comment type="catalytic activity">
    <reaction evidence="6">
        <text>L-tyrosyl-[protein] + ATP = O-phospho-L-tyrosyl-[protein] + ADP + H(+)</text>
        <dbReference type="Rhea" id="RHEA:10596"/>
        <dbReference type="Rhea" id="RHEA-COMP:10136"/>
        <dbReference type="Rhea" id="RHEA-COMP:20101"/>
        <dbReference type="ChEBI" id="CHEBI:15378"/>
        <dbReference type="ChEBI" id="CHEBI:30616"/>
        <dbReference type="ChEBI" id="CHEBI:46858"/>
        <dbReference type="ChEBI" id="CHEBI:61978"/>
        <dbReference type="ChEBI" id="CHEBI:456216"/>
        <dbReference type="EC" id="2.7.10.1"/>
    </reaction>
</comment>
<comment type="activity regulation">
    <text evidence="1">Present in an inactive conformation in the absence of bound ligand. Binding of VEGFA, VEGFB or PGF leads to dimerization and activation by autophosphorylation on tyrosine residues (By similarity).</text>
</comment>
<comment type="subunit">
    <text evidence="1">Interacts with VEGFA, VEGFB and PGF. Monomer in the absence of bound VEGFA, VEGFB or PGF. Homodimer in the presence of bound VEGFA, VEGFB and PGF. Can also form a heterodimer with KDR. Interacts (tyrosine phosphorylated) with CBL, CRK, GRB2, NCK1, PIK3R1, PLCG, PSEN1 and PTPN11. Probably interacts with PTPRB. Interacts with RACK1. Identified in a complex with CBL and CD2AP (By similarity).</text>
</comment>
<comment type="subcellular location">
    <subcellularLocation>
        <location>Cell membrane</location>
        <topology>Single-pass type I membrane protein</topology>
    </subcellularLocation>
    <subcellularLocation>
        <location evidence="1">Endosome</location>
    </subcellularLocation>
    <text evidence="1">Autophosphorylation promotes ubiquitination and endocytosis.</text>
</comment>
<comment type="domain">
    <text evidence="1">The second and third Ig-like C2-type (immunoglobulin-like) domains are sufficient for VEGFA binding.</text>
</comment>
<comment type="PTM">
    <text evidence="1">N-glycosylated.</text>
</comment>
<comment type="PTM">
    <text evidence="1">Ubiquitinated after VEGFA-mediated autophosphorylation, leading to proteolytic degradation.</text>
</comment>
<comment type="PTM">
    <text evidence="1">Autophosphorylated on tyrosine residues upon ligand binding. Autophosphorylation occurs in trans, i.e. one subunit of the dimeric receptor phosphorylates tyrosine residues on the other subunit. Phosphorylation at Tyr-1169 is important for interaction with PLCG. Phosphorylation at Tyr-1213 is important for interaction with PIK3R1, PTPN11, GRB2, and PLCG. Phosphorylation at Tyr-1328 is important for endocytosis and for interaction with CBL, NCK1 and CRK. Is probably dephosphorylated by PTPRB (By similarity).</text>
</comment>
<comment type="disruption phenotype">
    <text evidence="9 12 13 14">Embryonic lethality at about 9 dpc, due to defects in the formation and organization of the vascular network (PubMed:7596436, PubMed:9689083). Mice display abnormal blood island structures in the yolk sac, leading to defects in the organization of the vascular endothelium, excess growth and disorganization of embryonic and extraembryonic vasculature, including the endocardium and the microvasculature (PubMed:7596436). Reduced vascular sprout formation and migration (PubMed:14982871). Loss of retinal hyaloid vessel regression from postnatal day 3 (P3) to P8 (PubMed:30936473). Mice expressing a mutant protein that lacks the kinase domain survive and have no apparent phenotype (PubMed:9689083).</text>
</comment>
<comment type="similarity">
    <text evidence="5">Belongs to the protein kinase superfamily. Tyr protein kinase family. CSF-1/PDGF receptor subfamily.</text>
</comment>
<dbReference type="EC" id="2.7.10.1"/>
<dbReference type="EMBL" id="L07297">
    <property type="protein sequence ID" value="AAA40078.1"/>
    <property type="molecule type" value="mRNA"/>
</dbReference>
<dbReference type="EMBL" id="X78568">
    <property type="protein sequence ID" value="CAA55311.1"/>
    <property type="molecule type" value="mRNA"/>
</dbReference>
<dbReference type="EMBL" id="D88689">
    <property type="protein sequence ID" value="BAA24498.1"/>
    <property type="molecule type" value="mRNA"/>
</dbReference>
<dbReference type="CCDS" id="CCDS19879.1"/>
<dbReference type="PIR" id="I78875">
    <property type="entry name" value="I78875"/>
</dbReference>
<dbReference type="PIR" id="S49010">
    <property type="entry name" value="S49010"/>
</dbReference>
<dbReference type="RefSeq" id="NP_034358.2">
    <property type="nucleotide sequence ID" value="NM_010228.3"/>
</dbReference>
<dbReference type="SMR" id="P35969"/>
<dbReference type="BioGRID" id="199706">
    <property type="interactions" value="17"/>
</dbReference>
<dbReference type="CORUM" id="P35969"/>
<dbReference type="DIP" id="DIP-39359N"/>
<dbReference type="FunCoup" id="P35969">
    <property type="interactions" value="1298"/>
</dbReference>
<dbReference type="IntAct" id="P35969">
    <property type="interactions" value="8"/>
</dbReference>
<dbReference type="MINT" id="P35969"/>
<dbReference type="STRING" id="10090.ENSMUSP00000031653"/>
<dbReference type="BindingDB" id="P35969"/>
<dbReference type="ChEMBL" id="CHEMBL3516"/>
<dbReference type="GlyCosmos" id="P35969">
    <property type="glycosylation" value="12 sites, No reported glycans"/>
</dbReference>
<dbReference type="GlyGen" id="P35969">
    <property type="glycosylation" value="14 sites, 7 N-linked glycans (11 sites), 1 O-linked glycan (1 site)"/>
</dbReference>
<dbReference type="iPTMnet" id="P35969"/>
<dbReference type="PhosphoSitePlus" id="P35969"/>
<dbReference type="PaxDb" id="10090-ENSMUSP00000031653"/>
<dbReference type="PeptideAtlas" id="P35969"/>
<dbReference type="ProteomicsDB" id="297594"/>
<dbReference type="Pumba" id="P35969"/>
<dbReference type="ABCD" id="P35969">
    <property type="antibodies" value="2 sequenced antibodies"/>
</dbReference>
<dbReference type="DNASU" id="14254"/>
<dbReference type="GeneID" id="14254"/>
<dbReference type="KEGG" id="mmu:14254"/>
<dbReference type="UCSC" id="uc009aoh.1">
    <property type="organism name" value="mouse"/>
</dbReference>
<dbReference type="AGR" id="MGI:95558"/>
<dbReference type="CTD" id="2321"/>
<dbReference type="MGI" id="MGI:95558">
    <property type="gene designation" value="Flt1"/>
</dbReference>
<dbReference type="eggNOG" id="KOG0200">
    <property type="taxonomic scope" value="Eukaryota"/>
</dbReference>
<dbReference type="InParanoid" id="P35969"/>
<dbReference type="OrthoDB" id="10059496at2759"/>
<dbReference type="PhylomeDB" id="P35969"/>
<dbReference type="TreeFam" id="TF325768"/>
<dbReference type="BRENDA" id="2.7.10.1">
    <property type="organism ID" value="3474"/>
</dbReference>
<dbReference type="Reactome" id="R-MMU-194306">
    <property type="pathway name" value="Neurophilin interactions with VEGF and VEGFR"/>
</dbReference>
<dbReference type="Reactome" id="R-MMU-195399">
    <property type="pathway name" value="VEGF binds to VEGFR leading to receptor dimerization"/>
</dbReference>
<dbReference type="BioGRID-ORCS" id="14254">
    <property type="hits" value="3 hits in 80 CRISPR screens"/>
</dbReference>
<dbReference type="ChiTaRS" id="Flt1">
    <property type="organism name" value="mouse"/>
</dbReference>
<dbReference type="PRO" id="PR:P35969"/>
<dbReference type="Proteomes" id="UP000000589">
    <property type="component" value="Unplaced"/>
</dbReference>
<dbReference type="RNAct" id="P35969">
    <property type="molecule type" value="protein"/>
</dbReference>
<dbReference type="GO" id="GO:0005768">
    <property type="term" value="C:endosome"/>
    <property type="evidence" value="ECO:0007669"/>
    <property type="project" value="UniProtKB-SubCell"/>
</dbReference>
<dbReference type="GO" id="GO:0005615">
    <property type="term" value="C:extracellular space"/>
    <property type="evidence" value="ECO:0000314"/>
    <property type="project" value="MGI"/>
</dbReference>
<dbReference type="GO" id="GO:0005634">
    <property type="term" value="C:nucleus"/>
    <property type="evidence" value="ECO:0000314"/>
    <property type="project" value="MGI"/>
</dbReference>
<dbReference type="GO" id="GO:0005886">
    <property type="term" value="C:plasma membrane"/>
    <property type="evidence" value="ECO:0000250"/>
    <property type="project" value="UniProtKB"/>
</dbReference>
<dbReference type="GO" id="GO:0043235">
    <property type="term" value="C:receptor complex"/>
    <property type="evidence" value="ECO:0000266"/>
    <property type="project" value="MGI"/>
</dbReference>
<dbReference type="GO" id="GO:0005524">
    <property type="term" value="F:ATP binding"/>
    <property type="evidence" value="ECO:0007669"/>
    <property type="project" value="UniProtKB-KW"/>
</dbReference>
<dbReference type="GO" id="GO:0042802">
    <property type="term" value="F:identical protein binding"/>
    <property type="evidence" value="ECO:0000353"/>
    <property type="project" value="MGI"/>
</dbReference>
<dbReference type="GO" id="GO:0042803">
    <property type="term" value="F:protein homodimerization activity"/>
    <property type="evidence" value="ECO:0000250"/>
    <property type="project" value="UniProtKB"/>
</dbReference>
<dbReference type="GO" id="GO:0005021">
    <property type="term" value="F:vascular endothelial growth factor receptor activity"/>
    <property type="evidence" value="ECO:0000314"/>
    <property type="project" value="MGI"/>
</dbReference>
<dbReference type="GO" id="GO:0001525">
    <property type="term" value="P:angiogenesis"/>
    <property type="evidence" value="ECO:0000315"/>
    <property type="project" value="MGI"/>
</dbReference>
<dbReference type="GO" id="GO:0048514">
    <property type="term" value="P:blood vessel morphogenesis"/>
    <property type="evidence" value="ECO:0000315"/>
    <property type="project" value="UniProtKB"/>
</dbReference>
<dbReference type="GO" id="GO:0001569">
    <property type="term" value="P:branching involved in blood vessel morphogenesis"/>
    <property type="evidence" value="ECO:0000315"/>
    <property type="project" value="MGI"/>
</dbReference>
<dbReference type="GO" id="GO:0030154">
    <property type="term" value="P:cell differentiation"/>
    <property type="evidence" value="ECO:0007669"/>
    <property type="project" value="UniProtKB-KW"/>
</dbReference>
<dbReference type="GO" id="GO:0016477">
    <property type="term" value="P:cell migration"/>
    <property type="evidence" value="ECO:0000315"/>
    <property type="project" value="UniProtKB"/>
</dbReference>
<dbReference type="GO" id="GO:0006935">
    <property type="term" value="P:chemotaxis"/>
    <property type="evidence" value="ECO:0007669"/>
    <property type="project" value="UniProtKB-KW"/>
</dbReference>
<dbReference type="GO" id="GO:0048598">
    <property type="term" value="P:embryonic morphogenesis"/>
    <property type="evidence" value="ECO:0000315"/>
    <property type="project" value="UniProtKB"/>
</dbReference>
<dbReference type="GO" id="GO:1990384">
    <property type="term" value="P:hyaloid vascular plexus regression"/>
    <property type="evidence" value="ECO:0000315"/>
    <property type="project" value="UniProtKB"/>
</dbReference>
<dbReference type="GO" id="GO:0018108">
    <property type="term" value="P:peptidyl-tyrosine phosphorylation"/>
    <property type="evidence" value="ECO:0000250"/>
    <property type="project" value="UniProtKB"/>
</dbReference>
<dbReference type="GO" id="GO:1901534">
    <property type="term" value="P:positive regulation of hematopoietic progenitor cell differentiation"/>
    <property type="evidence" value="ECO:0000315"/>
    <property type="project" value="MGI"/>
</dbReference>
<dbReference type="GO" id="GO:0048597">
    <property type="term" value="P:post-embryonic camera-type eye morphogenesis"/>
    <property type="evidence" value="ECO:0000316"/>
    <property type="project" value="MGI"/>
</dbReference>
<dbReference type="GO" id="GO:0046777">
    <property type="term" value="P:protein autophosphorylation"/>
    <property type="evidence" value="ECO:0000250"/>
    <property type="project" value="UniProtKB"/>
</dbReference>
<dbReference type="GO" id="GO:0001666">
    <property type="term" value="P:response to hypoxia"/>
    <property type="evidence" value="ECO:0000315"/>
    <property type="project" value="MGI"/>
</dbReference>
<dbReference type="GO" id="GO:0002040">
    <property type="term" value="P:sprouting angiogenesis"/>
    <property type="evidence" value="ECO:0000315"/>
    <property type="project" value="MGI"/>
</dbReference>
<dbReference type="GO" id="GO:0048010">
    <property type="term" value="P:vascular endothelial growth factor receptor signaling pathway"/>
    <property type="evidence" value="ECO:0000315"/>
    <property type="project" value="MGI"/>
</dbReference>
<dbReference type="CDD" id="cd00096">
    <property type="entry name" value="Ig"/>
    <property type="match status" value="2"/>
</dbReference>
<dbReference type="FunFam" id="2.60.40.10:FF:000606">
    <property type="entry name" value="Vascular endothelial growth factor receptor 1"/>
    <property type="match status" value="1"/>
</dbReference>
<dbReference type="FunFam" id="2.60.40.10:FF:001031">
    <property type="entry name" value="Vascular endothelial growth factor receptor 1"/>
    <property type="match status" value="1"/>
</dbReference>
<dbReference type="FunFam" id="2.60.40.10:FF:001347">
    <property type="entry name" value="Vascular endothelial growth factor receptor 1"/>
    <property type="match status" value="1"/>
</dbReference>
<dbReference type="FunFam" id="2.60.40.10:FF:000934">
    <property type="entry name" value="vascular endothelial growth factor receptor 1"/>
    <property type="match status" value="1"/>
</dbReference>
<dbReference type="FunFam" id="2.60.40.10:FF:001014">
    <property type="entry name" value="vascular endothelial growth factor receptor 1"/>
    <property type="match status" value="1"/>
</dbReference>
<dbReference type="FunFam" id="2.60.40.10:FF:001245">
    <property type="entry name" value="vascular endothelial growth factor receptor 1"/>
    <property type="match status" value="1"/>
</dbReference>
<dbReference type="FunFam" id="1.10.510.10:FF:000077">
    <property type="entry name" value="Vascular endothelial growth factor receptor 2"/>
    <property type="match status" value="1"/>
</dbReference>
<dbReference type="FunFam" id="3.30.200.20:FF:000041">
    <property type="entry name" value="Vascular endothelial growth factor receptor 2"/>
    <property type="match status" value="1"/>
</dbReference>
<dbReference type="FunFam" id="2.60.40.10:FF:000143">
    <property type="entry name" value="Vascular endothelial growth factor receptor 3"/>
    <property type="match status" value="1"/>
</dbReference>
<dbReference type="Gene3D" id="2.60.40.10">
    <property type="entry name" value="Immunoglobulins"/>
    <property type="match status" value="7"/>
</dbReference>
<dbReference type="Gene3D" id="3.30.200.20">
    <property type="entry name" value="Phosphorylase Kinase, domain 1"/>
    <property type="match status" value="1"/>
</dbReference>
<dbReference type="Gene3D" id="1.10.510.10">
    <property type="entry name" value="Transferase(Phosphotransferase) domain 1"/>
    <property type="match status" value="1"/>
</dbReference>
<dbReference type="InterPro" id="IPR007110">
    <property type="entry name" value="Ig-like_dom"/>
</dbReference>
<dbReference type="InterPro" id="IPR036179">
    <property type="entry name" value="Ig-like_dom_sf"/>
</dbReference>
<dbReference type="InterPro" id="IPR013783">
    <property type="entry name" value="Ig-like_fold"/>
</dbReference>
<dbReference type="InterPro" id="IPR013098">
    <property type="entry name" value="Ig_I-set"/>
</dbReference>
<dbReference type="InterPro" id="IPR003599">
    <property type="entry name" value="Ig_sub"/>
</dbReference>
<dbReference type="InterPro" id="IPR003598">
    <property type="entry name" value="Ig_sub2"/>
</dbReference>
<dbReference type="InterPro" id="IPR013151">
    <property type="entry name" value="Immunoglobulin_dom"/>
</dbReference>
<dbReference type="InterPro" id="IPR011009">
    <property type="entry name" value="Kinase-like_dom_sf"/>
</dbReference>
<dbReference type="InterPro" id="IPR000719">
    <property type="entry name" value="Prot_kinase_dom"/>
</dbReference>
<dbReference type="InterPro" id="IPR017441">
    <property type="entry name" value="Protein_kinase_ATP_BS"/>
</dbReference>
<dbReference type="InterPro" id="IPR050122">
    <property type="entry name" value="RTK"/>
</dbReference>
<dbReference type="InterPro" id="IPR001245">
    <property type="entry name" value="Ser-Thr/Tyr_kinase_cat_dom"/>
</dbReference>
<dbReference type="InterPro" id="IPR008266">
    <property type="entry name" value="Tyr_kinase_AS"/>
</dbReference>
<dbReference type="InterPro" id="IPR020635">
    <property type="entry name" value="Tyr_kinase_cat_dom"/>
</dbReference>
<dbReference type="InterPro" id="IPR001824">
    <property type="entry name" value="Tyr_kinase_rcpt_3_CS"/>
</dbReference>
<dbReference type="InterPro" id="IPR041348">
    <property type="entry name" value="VEGFR-2_TMD"/>
</dbReference>
<dbReference type="InterPro" id="IPR055229">
    <property type="entry name" value="VEGFR1-3_5th"/>
</dbReference>
<dbReference type="InterPro" id="IPR055238">
    <property type="entry name" value="VEGFR1-3_N_Ig-like"/>
</dbReference>
<dbReference type="InterPro" id="IPR009135">
    <property type="entry name" value="VEGFR1_rcpt"/>
</dbReference>
<dbReference type="PANTHER" id="PTHR24416">
    <property type="entry name" value="TYROSINE-PROTEIN KINASE RECEPTOR"/>
    <property type="match status" value="1"/>
</dbReference>
<dbReference type="PANTHER" id="PTHR24416:SF390">
    <property type="entry name" value="VASCULAR ENDOTHELIAL GROWTH FACTOR RECEPTOR 1"/>
    <property type="match status" value="1"/>
</dbReference>
<dbReference type="Pfam" id="PF07679">
    <property type="entry name" value="I-set"/>
    <property type="match status" value="2"/>
</dbReference>
<dbReference type="Pfam" id="PF00047">
    <property type="entry name" value="ig"/>
    <property type="match status" value="1"/>
</dbReference>
<dbReference type="Pfam" id="PF13927">
    <property type="entry name" value="Ig_3"/>
    <property type="match status" value="1"/>
</dbReference>
<dbReference type="Pfam" id="PF22971">
    <property type="entry name" value="Ig_VEGFR-1-like_5th"/>
    <property type="match status" value="1"/>
</dbReference>
<dbReference type="Pfam" id="PF07714">
    <property type="entry name" value="PK_Tyr_Ser-Thr"/>
    <property type="match status" value="1"/>
</dbReference>
<dbReference type="Pfam" id="PF21339">
    <property type="entry name" value="VEGFR-1-like_Ig-like"/>
    <property type="match status" value="1"/>
</dbReference>
<dbReference type="Pfam" id="PF17988">
    <property type="entry name" value="VEGFR-2_TMD"/>
    <property type="match status" value="1"/>
</dbReference>
<dbReference type="Pfam" id="PF22854">
    <property type="entry name" value="VEGFR1-3_N_Ig-like"/>
    <property type="match status" value="1"/>
</dbReference>
<dbReference type="PIRSF" id="PIRSF000615">
    <property type="entry name" value="TyrPK_CSF1-R"/>
    <property type="match status" value="1"/>
</dbReference>
<dbReference type="PRINTS" id="PR01832">
    <property type="entry name" value="VEGFRECEPTOR"/>
</dbReference>
<dbReference type="PRINTS" id="PR01833">
    <property type="entry name" value="VEGFRECEPTR1"/>
</dbReference>
<dbReference type="SMART" id="SM00409">
    <property type="entry name" value="IG"/>
    <property type="match status" value="7"/>
</dbReference>
<dbReference type="SMART" id="SM00408">
    <property type="entry name" value="IGc2"/>
    <property type="match status" value="6"/>
</dbReference>
<dbReference type="SMART" id="SM00219">
    <property type="entry name" value="TyrKc"/>
    <property type="match status" value="1"/>
</dbReference>
<dbReference type="SUPFAM" id="SSF48726">
    <property type="entry name" value="Immunoglobulin"/>
    <property type="match status" value="7"/>
</dbReference>
<dbReference type="SUPFAM" id="SSF56112">
    <property type="entry name" value="Protein kinase-like (PK-like)"/>
    <property type="match status" value="1"/>
</dbReference>
<dbReference type="PROSITE" id="PS50835">
    <property type="entry name" value="IG_LIKE"/>
    <property type="match status" value="5"/>
</dbReference>
<dbReference type="PROSITE" id="PS00107">
    <property type="entry name" value="PROTEIN_KINASE_ATP"/>
    <property type="match status" value="1"/>
</dbReference>
<dbReference type="PROSITE" id="PS50011">
    <property type="entry name" value="PROTEIN_KINASE_DOM"/>
    <property type="match status" value="1"/>
</dbReference>
<dbReference type="PROSITE" id="PS00109">
    <property type="entry name" value="PROTEIN_KINASE_TYR"/>
    <property type="match status" value="1"/>
</dbReference>
<dbReference type="PROSITE" id="PS00240">
    <property type="entry name" value="RECEPTOR_TYR_KIN_III"/>
    <property type="match status" value="1"/>
</dbReference>
<gene>
    <name type="primary">Flt1</name>
    <name type="synonym">Emrk2</name>
    <name type="synonym">Flt</name>
    <name type="synonym">Vegfr1</name>
</gene>
<sequence length="1333" mass="149876">MVSCWDTAVLPYALLGCLLLTGYGSGSKLKVPELSLKGTQHVMQAGQTLFLKCRGEAAHSWSLPTTVSQEDKRLSITPPSACGRDNRQFCSTLTLDTAQANHTGLYTCRYLPTSTSKKKKAESSIYIFVSDAGSPFIEMHTDIPKLVHMTEGRQLIIPCRVTSPNVTVTLKKFPFDTLTPDGQRITWDSRRGFIIANATYKEIGLLNCEATVNGHLYQTNYLTHRQTNTILDVQIRPPSPVRLLHGQTLVLNCTATTELNTRVQMSWNYPGKATKRASIRQRIDRSHSHNNVFHSVLKINNVESRDKGLYTCRVKSGSSFQSFNTSVHVYEKGFISVKHRKQPVQETTAGRRSYRLSMKVKAFPSPEIVWLKDGSPATLKSARYLVHGYSLIIKDVTTEDAGDYTILLGIKQSRLFKNLTATLIVNVKPQIYEKSVSSLPSPPLYPLGSRQVLTCTVYGIPRPTITWLWHPCHHNHSKERYDFCTENEESFILDPSSNLGNRIESISQRMTVIEGTNKTVSTLVVADSQTPGIYSCRAFNKIGTVERNIKFYVTDVPNGFHVSLEKMPAEGEDLKLSCVVNKFLYRDITWILLRTVNNRTMHHSISKQKMATTQDYSITLNLVIKNVSLEDSGTYACRARNIYTGEDILRKTEVLVRDSEAPHLLQNLSDYEVSISGSTTLDCQARGVPAPQITWFKNNHKIQQEPGIILGPGNSTLFIERVTEEDEGVYRCRATNQKGAVESAAYLTVQGTSDKSNLELITLTCTCVAATLFWLLLTLFIRKLKRSSSEVKTDYLSIIMDPDEVPLDEQCERLPYDASKWEFARERLKLGKSLGRGAFGKVVQASAFGIKKSPTCRTVAVKMLKEGATASEYKALMTELKILTHIGHHLNVVNLLGACTKQGGPLMVIVEYCKYGNLSNYLKSKRDLFCLNKDAALHMELKKESLEPGLEQGQKPRLDSVSSSSVTSSSFPEDRSVSDVEGDEDYSEISKQPLTMEDLISYSFQVARGMEFLSSRKCIHRDLAARNILLSENNVVKICDFGLARDIYKNPDYVRRGDTRLPLKWMAPESIFDKVYSTKSDVWSYGVLLWEIFSLGGSPYPGVQMDEDFCSRLKEGMRMRTPEYATPEIYQIMLDCWHKDPKERPRFAELVEKLGDLLQANVQQDGKDYIPLNAILTRNSSFTYSTPTFSEDLFKDGFADPHFHSGSSDDVRYVNAFKFMSLERIKTFEELSPNSTSMFEDYQLDTSTLLGSPLLKRFTWTETKPKASMKIDLRIASKSKEAGLSDLPRPSFCFSSCGHIRPVQDDESELGKESCCSPPPDYNSVVLYSSPPA</sequence>